<gene>
    <name type="primary">OPG053</name>
    <name type="ORF">F9</name>
</gene>
<sequence>MAETKEFKTLYNLFIDSYLQKLAQHSIPTNVTCAIHIGEVIGQFKNCALRITNKCMSNSRLSFTLMVESFIEVISLLPEKDRRAIAEEIGIDLDDVPSAVSKLEKNCNAYAEVNNIIDIQKLDIGECSAPPGQHMLLQIVNTGSAEANCGLQTIVKSLNKIYVPPIIENRLPYYDPWFLVGVAIILVIFTVAICSIRRNLALKYRYGTFLYV</sequence>
<accession>P68453</accession>
<accession>P21018</accession>
<proteinExistence type="inferred from homology"/>
<reference key="1">
    <citation type="journal article" date="1988" name="Biotekhnologiya">
        <title>Structural-functional organization of segment of vaccinia virus genome.</title>
        <authorList>
            <person name="Mikryukov N.N."/>
            <person name="Chizhikov V.E."/>
            <person name="Prikhod'Ko G.G."/>
            <person name="Urmmanov I.M."/>
            <person name="Serpinskii O.I."/>
            <person name="Blinov V.M."/>
            <person name="Nikulin A.E."/>
            <person name="Vasilenko S.K."/>
        </authorList>
    </citation>
    <scope>NUCLEOTIDE SEQUENCE [GENOMIC DNA]</scope>
</reference>
<protein>
    <recommendedName>
        <fullName>EFC-associated protein OPG053</fullName>
    </recommendedName>
    <alternativeName>
        <fullName>Protein F9</fullName>
    </alternativeName>
</protein>
<name>PG053_VACCP</name>
<organism>
    <name type="scientific">Vaccinia virus (strain L-IVP)</name>
    <name type="common">VACV</name>
    <dbReference type="NCBI Taxonomy" id="31531"/>
    <lineage>
        <taxon>Viruses</taxon>
        <taxon>Varidnaviria</taxon>
        <taxon>Bamfordvirae</taxon>
        <taxon>Nucleocytoviricota</taxon>
        <taxon>Pokkesviricetes</taxon>
        <taxon>Chitovirales</taxon>
        <taxon>Poxviridae</taxon>
        <taxon>Chordopoxvirinae</taxon>
        <taxon>Orthopoxvirus</taxon>
        <taxon>Vaccinia virus</taxon>
    </lineage>
</organism>
<organismHost>
    <name type="scientific">Homo sapiens</name>
    <name type="common">Human</name>
    <dbReference type="NCBI Taxonomy" id="9606"/>
</organismHost>
<evidence type="ECO:0000250" key="1">
    <source>
        <dbReference type="UniProtKB" id="P24361"/>
    </source>
</evidence>
<evidence type="ECO:0000255" key="2"/>
<evidence type="ECO:0000305" key="3"/>
<feature type="chain" id="PRO_0000099492" description="EFC-associated protein OPG053">
    <location>
        <begin position="1"/>
        <end position="212"/>
    </location>
</feature>
<feature type="topological domain" description="Virion surface" evidence="2">
    <location>
        <begin position="1"/>
        <end position="175"/>
    </location>
</feature>
<feature type="transmembrane region" description="Helical" evidence="2">
    <location>
        <begin position="176"/>
        <end position="196"/>
    </location>
</feature>
<feature type="topological domain" description="Intravirion" evidence="2">
    <location>
        <begin position="197"/>
        <end position="212"/>
    </location>
</feature>
<feature type="disulfide bond" description="by OPG088" evidence="1">
    <location>
        <begin position="33"/>
        <end position="55"/>
    </location>
</feature>
<feature type="disulfide bond" description="by OPG088" evidence="1">
    <location>
        <begin position="47"/>
        <end position="127"/>
    </location>
</feature>
<feature type="disulfide bond" description="by OPG088" evidence="1">
    <location>
        <begin position="107"/>
        <end position="149"/>
    </location>
</feature>
<dbReference type="EMBL" id="M57977">
    <property type="protein sequence ID" value="AAA48289.1"/>
    <property type="molecule type" value="Genomic_DNA"/>
</dbReference>
<dbReference type="SMR" id="P68453"/>
<dbReference type="TCDB" id="1.G.11.1.1">
    <property type="family name" value="the poxvirus cell entry protein complex (pep-c) family"/>
</dbReference>
<dbReference type="DNASU" id="3707505"/>
<dbReference type="KEGG" id="vg:3707505"/>
<dbReference type="GO" id="GO:0016020">
    <property type="term" value="C:membrane"/>
    <property type="evidence" value="ECO:0007669"/>
    <property type="project" value="UniProtKB-KW"/>
</dbReference>
<dbReference type="GO" id="GO:0019031">
    <property type="term" value="C:viral envelope"/>
    <property type="evidence" value="ECO:0007669"/>
    <property type="project" value="UniProtKB-KW"/>
</dbReference>
<dbReference type="GO" id="GO:0055036">
    <property type="term" value="C:virion membrane"/>
    <property type="evidence" value="ECO:0007669"/>
    <property type="project" value="UniProtKB-SubCell"/>
</dbReference>
<dbReference type="InterPro" id="IPR003472">
    <property type="entry name" value="Virion_mem_poxvirus_L1"/>
</dbReference>
<dbReference type="Pfam" id="PF02442">
    <property type="entry name" value="L1R_F9L"/>
    <property type="match status" value="1"/>
</dbReference>
<keyword id="KW-1015">Disulfide bond</keyword>
<keyword id="KW-0426">Late protein</keyword>
<keyword id="KW-0472">Membrane</keyword>
<keyword id="KW-0812">Transmembrane</keyword>
<keyword id="KW-1133">Transmembrane helix</keyword>
<keyword id="KW-0261">Viral envelope protein</keyword>
<keyword id="KW-0946">Virion</keyword>
<comment type="function">
    <text evidence="1">Component of the entry fusion complex (EFC), which consists of 11 proteins. During cell infection, this complex mediates entry of the virion core into the host cytoplasm by a two-step mechanism consisting of lipid mixing of the viral and cellular membranes and subsequent pore formation.</text>
</comment>
<comment type="subunit">
    <text evidence="1">Component of the entry fusion complex (EFC) composed of OPG053, OPG076, OPG086, OPG094, OPG095, OPG099, OPG107, OPG143, OPG104, OPG147 and OPG155. Except for OPG095 and OPG052, each of the EFC proteins is required for assembly or stability of the complex.</text>
</comment>
<comment type="subcellular location">
    <subcellularLocation>
        <location evidence="1">Virion membrane</location>
        <topology evidence="1">Single-pass membrane protein</topology>
    </subcellularLocation>
    <text evidence="1">Component of the mature virion (MV) membrane.</text>
</comment>
<comment type="PTM">
    <text evidence="1">Disulfid bonds are oxidized in the cytoplasm by OPG088 protein.</text>
</comment>
<comment type="PTM">
    <text evidence="1">Unglycosylated because produced in viral factories instead of the classic ER -Golgi route.</text>
</comment>
<comment type="similarity">
    <text evidence="3">Belongs to the orthopoxvirus OPG053 family.</text>
</comment>